<accession>Q9E6M8</accession>
<keyword id="KW-0325">Glycoprotein</keyword>
<keyword id="KW-1035">Host cytoplasm</keyword>
<keyword id="KW-1048">Host nucleus</keyword>
<keyword id="KW-0426">Late protein</keyword>
<keyword id="KW-1185">Reference proteome</keyword>
<keyword id="KW-0804">Transcription</keyword>
<keyword id="KW-0805">Transcription regulation</keyword>
<keyword id="KW-0946">Virion</keyword>
<keyword id="KW-0920">Virion tegument</keyword>
<feature type="chain" id="PRO_0000406587" description="Tegument protein UL47 homolog">
    <location>
        <begin position="1"/>
        <end position="808"/>
    </location>
</feature>
<feature type="region of interest" description="Disordered" evidence="3">
    <location>
        <begin position="1"/>
        <end position="21"/>
    </location>
</feature>
<feature type="region of interest" description="Disordered" evidence="3">
    <location>
        <begin position="77"/>
        <end position="266"/>
    </location>
</feature>
<feature type="compositionally biased region" description="Basic and acidic residues" evidence="3">
    <location>
        <begin position="83"/>
        <end position="92"/>
    </location>
</feature>
<feature type="compositionally biased region" description="Basic residues" evidence="3">
    <location>
        <begin position="133"/>
        <end position="160"/>
    </location>
</feature>
<feature type="compositionally biased region" description="Polar residues" evidence="3">
    <location>
        <begin position="162"/>
        <end position="171"/>
    </location>
</feature>
<feature type="compositionally biased region" description="Basic residues" evidence="3">
    <location>
        <begin position="197"/>
        <end position="214"/>
    </location>
</feature>
<feature type="compositionally biased region" description="Basic and acidic residues" evidence="3">
    <location>
        <begin position="235"/>
        <end position="259"/>
    </location>
</feature>
<reference key="1">
    <citation type="journal article" date="2000" name="J. Virol.">
        <title>The genome of a very virulent Marek's disease virus.</title>
        <authorList>
            <person name="Tulman E.R."/>
            <person name="Afonso C.L."/>
            <person name="Lu Z."/>
            <person name="Zsak L."/>
            <person name="Rock D.L."/>
            <person name="Kutish G.F."/>
        </authorList>
    </citation>
    <scope>NUCLEOTIDE SEQUENCE [LARGE SCALE GENOMIC DNA]</scope>
</reference>
<reference key="2">
    <citation type="journal article" date="2020" name="J. Virol.">
        <title>The tegument protein pUL47 of Marek's Disease Virus is necessary for horizontal transmission and is important for expression of glycoprotein gC.</title>
        <authorList>
            <person name="Chuard A."/>
            <person name="Courvoisier-Guyader K."/>
            <person name="Remy S."/>
            <person name="Spatz S."/>
            <person name="Denesvre C."/>
            <person name="Pasdeloup D."/>
        </authorList>
    </citation>
    <scope>FUNCTION</scope>
    <scope>DISRUPTION PHENOTYPE</scope>
</reference>
<dbReference type="EMBL" id="AF243438">
    <property type="protein sequence ID" value="AAG14240.1"/>
    <property type="molecule type" value="Genomic_DNA"/>
</dbReference>
<dbReference type="RefSeq" id="YP_001033976.1">
    <property type="nucleotide sequence ID" value="NC_002229.3"/>
</dbReference>
<dbReference type="GeneID" id="4811521"/>
<dbReference type="KEGG" id="vg:4811521"/>
<dbReference type="Proteomes" id="UP000008072">
    <property type="component" value="Segment"/>
</dbReference>
<dbReference type="GO" id="GO:0030430">
    <property type="term" value="C:host cell cytoplasm"/>
    <property type="evidence" value="ECO:0007669"/>
    <property type="project" value="UniProtKB-SubCell"/>
</dbReference>
<dbReference type="GO" id="GO:0042025">
    <property type="term" value="C:host cell nucleus"/>
    <property type="evidence" value="ECO:0007669"/>
    <property type="project" value="UniProtKB-SubCell"/>
</dbReference>
<dbReference type="GO" id="GO:0019033">
    <property type="term" value="C:viral tegument"/>
    <property type="evidence" value="ECO:0007669"/>
    <property type="project" value="UniProtKB-SubCell"/>
</dbReference>
<dbReference type="GO" id="GO:0006355">
    <property type="term" value="P:regulation of DNA-templated transcription"/>
    <property type="evidence" value="ECO:0007669"/>
    <property type="project" value="InterPro"/>
</dbReference>
<dbReference type="InterPro" id="IPR005029">
    <property type="entry name" value="Herpes_UL47"/>
</dbReference>
<dbReference type="Pfam" id="PF03362">
    <property type="entry name" value="Herpes_UL47"/>
    <property type="match status" value="1"/>
</dbReference>
<sequence>MQMPSMHRYGHPGQNQRRENQSIRNYLSTRSGSRNRISRSPHNMASVYTRAPAIAYDDDTYDTLEESEDNGFVKTIPNEEQFDNSRGRDRTRSGRSNGHSFLGYLRDTFTERQPSGRRGSDTSRDMINASLKSRARSRRRSSSRRRHRNASMHMHFRGGSRRSATGSQNLINHDRHRRISQSSLGSSREGEYNHASRSSRVRRRHRRSSRRRGPRAGGHGDSFTSITPSGSAEHPISDIDQKRLRKNSDTSSRGTRESPIDDSFGEDNYRLVSRNRATSIYTTPSALYTRTESLKTYKRTTGDSKGTSPALASFLEHKTLSADVINHIPLLRMLESVPRSEAIREDELLYMSAKTFKYVSHWYSNSRPDYANGKMYTSPPPENALAWKRTAKQAHALILHLGRDSLRSSVMSLRELNQSNAVLFLLNSCLKIAICIHKNKMHKYGNVKILSTMPHVRKGDAQIFENSTIHTMRDPMASAARASYGSLAYWPELRCALGSENKRIVRYAIVAMLQAEIYLLTRISSQRVSMNKSELRILSSCITMECVAACIAVQFLYTSLWQILYSSKINREYIWLKTASERSKKLPMASTDLLYAEGACLGRLESSLYGTEGTPLGRTLVEAYLATRSAFTELIYEFQSNSDLFLEKQNVKLGEKLTAAVITATVVLQRLLGHLNIIIAQMVIGSVYHKKDVDVWSETFKMYQYLSYVCKSLYRPVTIDEYINDRDDTMEYLTLEFARGDPPTGMASVIYEDEKSEELESLKLVPPPINYDILGNLVPLRNAIEDASDVIFEKRAVETARREPQRAN</sequence>
<name>TEG5_GAHVM</name>
<evidence type="ECO:0000250" key="1"/>
<evidence type="ECO:0000250" key="2">
    <source>
        <dbReference type="UniProtKB" id="P10231"/>
    </source>
</evidence>
<evidence type="ECO:0000256" key="3">
    <source>
        <dbReference type="SAM" id="MobiDB-lite"/>
    </source>
</evidence>
<evidence type="ECO:0000269" key="4">
    <source>
    </source>
</evidence>
<evidence type="ECO:0000305" key="5"/>
<organismHost>
    <name type="scientific">Gallus gallus</name>
    <name type="common">Chicken</name>
    <dbReference type="NCBI Taxonomy" id="9031"/>
</organismHost>
<protein>
    <recommendedName>
        <fullName>Tegument protein UL47 homolog</fullName>
    </recommendedName>
</protein>
<gene>
    <name type="primary">MDV060</name>
</gene>
<comment type="function">
    <text evidence="2 4">Tegument protein that can bind to various RNA transcripts. Plays a role in the attenuation of selective viral and cellular mRNA degradation by modulating the activity of host shutoff RNase UL41/VHS. Also plays a role in the primary envelopment of virions in the perinuclear space, probably by interacting with two nuclear egress proteins UL31 and UL34 (By similarity). Plays an important role in the splicing of glycoprotein/gC transcripts and thereby participates in bird-to-bird viral transmission (PubMed:32999032).</text>
</comment>
<comment type="subunit">
    <text evidence="2">Interacts with US3 kinase. Interacts with UL31 and UL34; these interactions seem important for efficient virion nuclear egress. Interacts with UL41/VHS.</text>
</comment>
<comment type="subcellular location">
    <subcellularLocation>
        <location evidence="2">Virion tegument</location>
    </subcellularLocation>
    <subcellularLocation>
        <location evidence="2">Host nucleus</location>
    </subcellularLocation>
    <subcellularLocation>
        <location evidence="2">Host cytoplasm</location>
    </subcellularLocation>
    <text evidence="2">Major tegument protein of the virion. Undergoes nucleocytoplasmic shuttling during infection. Localizes to the major sites of transcription in the infected cell nucleus.</text>
</comment>
<comment type="domain">
    <text evidence="2">The nuclear export signal is CRM1-dependent.</text>
</comment>
<comment type="PTM">
    <text evidence="2">Phosphorylated by US3. This phosphorylation is required for proper nuclear localization.</text>
</comment>
<comment type="PTM">
    <text>O-glycosylated.</text>
</comment>
<comment type="disruption phenotype">
    <text evidence="4">Deletion mutants are unable to be horizontally transmitted to naive chickens contrary to the wild-type virus while skin tropism remains unaffected. Mutants show also an increase of unspliced glycoprotein/gC transcripts.</text>
</comment>
<comment type="miscellaneous">
    <text evidence="1">Expressed in late in the infection.</text>
</comment>
<comment type="similarity">
    <text evidence="5">Belongs to the alphaherpesvirinae HHV-1 UL47 family.</text>
</comment>
<organism>
    <name type="scientific">Gallid herpesvirus 2 (strain Chicken/Md5/ATCC VR-987)</name>
    <name type="common">GaHV-2</name>
    <name type="synonym">Marek's disease herpesvirus type 1</name>
    <dbReference type="NCBI Taxonomy" id="10389"/>
    <lineage>
        <taxon>Viruses</taxon>
        <taxon>Duplodnaviria</taxon>
        <taxon>Heunggongvirae</taxon>
        <taxon>Peploviricota</taxon>
        <taxon>Herviviricetes</taxon>
        <taxon>Herpesvirales</taxon>
        <taxon>Orthoherpesviridae</taxon>
        <taxon>Alphaherpesvirinae</taxon>
        <taxon>Mardivirus</taxon>
        <taxon>Mardivirus gallidalpha2</taxon>
        <taxon>Gallid alphaherpesvirus 2</taxon>
    </lineage>
</organism>
<proteinExistence type="inferred from homology"/>